<dbReference type="EMBL" id="EF380351">
    <property type="protein sequence ID" value="ABQ45285.1"/>
    <property type="molecule type" value="Genomic_DNA"/>
</dbReference>
<dbReference type="RefSeq" id="YP_001294221.1">
    <property type="nucleotide sequence ID" value="NC_009599.1"/>
</dbReference>
<dbReference type="SMR" id="A6MM73"/>
<dbReference type="GeneID" id="5236895"/>
<dbReference type="GO" id="GO:0009507">
    <property type="term" value="C:chloroplast"/>
    <property type="evidence" value="ECO:0007669"/>
    <property type="project" value="UniProtKB-SubCell"/>
</dbReference>
<dbReference type="GO" id="GO:0022625">
    <property type="term" value="C:cytosolic large ribosomal subunit"/>
    <property type="evidence" value="ECO:0007669"/>
    <property type="project" value="TreeGrafter"/>
</dbReference>
<dbReference type="GO" id="GO:0070180">
    <property type="term" value="F:large ribosomal subunit rRNA binding"/>
    <property type="evidence" value="ECO:0007669"/>
    <property type="project" value="TreeGrafter"/>
</dbReference>
<dbReference type="GO" id="GO:0003735">
    <property type="term" value="F:structural constituent of ribosome"/>
    <property type="evidence" value="ECO:0007669"/>
    <property type="project" value="InterPro"/>
</dbReference>
<dbReference type="GO" id="GO:0006412">
    <property type="term" value="P:translation"/>
    <property type="evidence" value="ECO:0007669"/>
    <property type="project" value="UniProtKB-UniRule"/>
</dbReference>
<dbReference type="CDD" id="cd00337">
    <property type="entry name" value="Ribosomal_uL14"/>
    <property type="match status" value="1"/>
</dbReference>
<dbReference type="FunFam" id="2.40.150.20:FF:000002">
    <property type="entry name" value="50S ribosomal protein L14, chloroplastic"/>
    <property type="match status" value="1"/>
</dbReference>
<dbReference type="Gene3D" id="2.40.150.20">
    <property type="entry name" value="Ribosomal protein L14"/>
    <property type="match status" value="1"/>
</dbReference>
<dbReference type="HAMAP" id="MF_01367">
    <property type="entry name" value="Ribosomal_uL14"/>
    <property type="match status" value="1"/>
</dbReference>
<dbReference type="InterPro" id="IPR000218">
    <property type="entry name" value="Ribosomal_uL14"/>
</dbReference>
<dbReference type="InterPro" id="IPR005745">
    <property type="entry name" value="Ribosomal_uL14_bac-type"/>
</dbReference>
<dbReference type="InterPro" id="IPR019972">
    <property type="entry name" value="Ribosomal_uL14_CS"/>
</dbReference>
<dbReference type="InterPro" id="IPR036853">
    <property type="entry name" value="Ribosomal_uL14_sf"/>
</dbReference>
<dbReference type="NCBIfam" id="TIGR01067">
    <property type="entry name" value="rplN_bact"/>
    <property type="match status" value="1"/>
</dbReference>
<dbReference type="PANTHER" id="PTHR11761">
    <property type="entry name" value="50S/60S RIBOSOMAL PROTEIN L14/L23"/>
    <property type="match status" value="1"/>
</dbReference>
<dbReference type="PANTHER" id="PTHR11761:SF3">
    <property type="entry name" value="LARGE RIBOSOMAL SUBUNIT PROTEIN UL14M"/>
    <property type="match status" value="1"/>
</dbReference>
<dbReference type="Pfam" id="PF00238">
    <property type="entry name" value="Ribosomal_L14"/>
    <property type="match status" value="1"/>
</dbReference>
<dbReference type="SMART" id="SM01374">
    <property type="entry name" value="Ribosomal_L14"/>
    <property type="match status" value="1"/>
</dbReference>
<dbReference type="SUPFAM" id="SSF50193">
    <property type="entry name" value="Ribosomal protein L14"/>
    <property type="match status" value="1"/>
</dbReference>
<dbReference type="PROSITE" id="PS00049">
    <property type="entry name" value="RIBOSOMAL_L14"/>
    <property type="match status" value="1"/>
</dbReference>
<evidence type="ECO:0000255" key="1">
    <source>
        <dbReference type="HAMAP-Rule" id="MF_01367"/>
    </source>
</evidence>
<evidence type="ECO:0000305" key="2"/>
<name>RK14_BUXMI</name>
<protein>
    <recommendedName>
        <fullName evidence="1">Large ribosomal subunit protein uL14c</fullName>
    </recommendedName>
    <alternativeName>
        <fullName evidence="2">50S ribosomal protein L14, chloroplastic</fullName>
    </alternativeName>
</protein>
<organism>
    <name type="scientific">Buxus microphylla</name>
    <name type="common">Littleleaf boxwood</name>
    <name type="synonym">Japanese boxwood</name>
    <dbReference type="NCBI Taxonomy" id="153571"/>
    <lineage>
        <taxon>Eukaryota</taxon>
        <taxon>Viridiplantae</taxon>
        <taxon>Streptophyta</taxon>
        <taxon>Embryophyta</taxon>
        <taxon>Tracheophyta</taxon>
        <taxon>Spermatophyta</taxon>
        <taxon>Magnoliopsida</taxon>
        <taxon>Buxales</taxon>
        <taxon>Buxaceae</taxon>
        <taxon>Buxus</taxon>
    </lineage>
</organism>
<comment type="function">
    <text evidence="1">Binds to 23S rRNA.</text>
</comment>
<comment type="subunit">
    <text evidence="1">Part of the 50S ribosomal subunit.</text>
</comment>
<comment type="subcellular location">
    <subcellularLocation>
        <location>Plastid</location>
        <location>Chloroplast</location>
    </subcellularLocation>
</comment>
<comment type="similarity">
    <text evidence="1">Belongs to the universal ribosomal protein uL14 family.</text>
</comment>
<proteinExistence type="inferred from homology"/>
<feature type="chain" id="PRO_0000355863" description="Large ribosomal subunit protein uL14c">
    <location>
        <begin position="1"/>
        <end position="122"/>
    </location>
</feature>
<geneLocation type="chloroplast"/>
<reference key="1">
    <citation type="journal article" date="2007" name="Mol. Phylogenet. Evol.">
        <title>Phylogenetic and evolutionary implications of complete chloroplast genome sequences of four early-diverging angiosperms: Buxus (Buxaceae), Chloranthus (Chloranthaceae), Dioscorea (Dioscoreaceae), and Illicium (Schisandraceae).</title>
        <authorList>
            <person name="Hansen D.R."/>
            <person name="Dastidar S.G."/>
            <person name="Cai Z."/>
            <person name="Penaflor C."/>
            <person name="Kuehl J.V."/>
            <person name="Boore J.L."/>
            <person name="Jansen R.K."/>
        </authorList>
    </citation>
    <scope>NUCLEOTIDE SEQUENCE [LARGE SCALE GENOMIC DNA]</scope>
</reference>
<accession>A6MM73</accession>
<gene>
    <name evidence="1" type="primary">rpl14</name>
</gene>
<keyword id="KW-0150">Chloroplast</keyword>
<keyword id="KW-0934">Plastid</keyword>
<keyword id="KW-0687">Ribonucleoprotein</keyword>
<keyword id="KW-0689">Ribosomal protein</keyword>
<keyword id="KW-0694">RNA-binding</keyword>
<keyword id="KW-0699">rRNA-binding</keyword>
<sequence>MIQPQTYLNVADNSGARKLMCIRIVGASNRRYAHIGDVIVAVIKEAVPNMPLERSEVIRAVIVRTCKELNRGNGMIIRYDDNAAVVIDQEGNPKGTRVFGAIARELRQLNFTKIVSLAPEVL</sequence>